<reference key="1">
    <citation type="journal article" date="2007" name="J. Exp. Zool. B Mol. Dev. Evol.">
        <title>Venomous auger snail Hastula (Impages) hectica (Linnaeus, 1758): molecular phylogeny, foregut anatomy and comparative toxinology.</title>
        <authorList>
            <person name="Imperial J.S."/>
            <person name="Kantor Y."/>
            <person name="Watkins M."/>
            <person name="Heralde F.M. III"/>
            <person name="Stevenson B."/>
            <person name="Chen P."/>
            <person name="Hansson K."/>
            <person name="Stenflo J."/>
            <person name="Ownby J.P."/>
            <person name="Bouchet P."/>
            <person name="Olivera B.M."/>
        </authorList>
    </citation>
    <scope>PROTEIN SEQUENCE</scope>
    <source>
        <tissue>Venom</tissue>
    </source>
</reference>
<protein>
    <recommendedName>
        <fullName>Augerpeptide hheTx2</fullName>
    </recommendedName>
</protein>
<proteinExistence type="evidence at protein level"/>
<feature type="peptide" id="PRO_0000402155" description="Augerpeptide hheTx2">
    <location>
        <begin position="1"/>
        <end position="29"/>
    </location>
</feature>
<dbReference type="GO" id="GO:0005576">
    <property type="term" value="C:extracellular region"/>
    <property type="evidence" value="ECO:0007669"/>
    <property type="project" value="UniProtKB-SubCell"/>
</dbReference>
<dbReference type="GO" id="GO:0090729">
    <property type="term" value="F:toxin activity"/>
    <property type="evidence" value="ECO:0007669"/>
    <property type="project" value="UniProtKB-KW"/>
</dbReference>
<accession>P0CI09</accession>
<organism>
    <name type="scientific">Hastula hectica</name>
    <name type="common">Sea snail</name>
    <name type="synonym">Impages hectica</name>
    <dbReference type="NCBI Taxonomy" id="745793"/>
    <lineage>
        <taxon>Eukaryota</taxon>
        <taxon>Metazoa</taxon>
        <taxon>Spiralia</taxon>
        <taxon>Lophotrochozoa</taxon>
        <taxon>Mollusca</taxon>
        <taxon>Gastropoda</taxon>
        <taxon>Caenogastropoda</taxon>
        <taxon>Neogastropoda</taxon>
        <taxon>Conoidea</taxon>
        <taxon>Terebridae</taxon>
        <taxon>Hastula</taxon>
    </lineage>
</organism>
<keyword id="KW-0903">Direct protein sequencing</keyword>
<keyword id="KW-1015">Disulfide bond</keyword>
<keyword id="KW-0964">Secreted</keyword>
<keyword id="KW-0800">Toxin</keyword>
<comment type="subcellular location">
    <subcellularLocation>
        <location>Secreted</location>
    </subcellularLocation>
</comment>
<comment type="tissue specificity">
    <text>Expressed by the venom duct.</text>
</comment>
<comment type="domain">
    <text>The cysteine framework is C-C-C-C-C-CCC.</text>
</comment>
<comment type="PTM">
    <text evidence="1">Contains 4 disulfide bonds.</text>
</comment>
<sequence length="29" mass="3003">SCSSGCSDCNSDSCQCTLNQFTNSDSCCC</sequence>
<evidence type="ECO:0000305" key="1"/>
<name>TE2_HASHE</name>